<evidence type="ECO:0000255" key="1">
    <source>
        <dbReference type="HAMAP-Rule" id="MF_00732"/>
    </source>
</evidence>
<gene>
    <name evidence="1" type="primary">mntR</name>
    <name type="ordered locus">BPUM_2184</name>
</gene>
<proteinExistence type="inferred from homology"/>
<name>MNTR_BACP2</name>
<reference key="1">
    <citation type="journal article" date="2007" name="PLoS ONE">
        <title>Paradoxical DNA repair and peroxide resistance gene conservation in Bacillus pumilus SAFR-032.</title>
        <authorList>
            <person name="Gioia J."/>
            <person name="Yerrapragada S."/>
            <person name="Qin X."/>
            <person name="Jiang H."/>
            <person name="Igboeli O.C."/>
            <person name="Muzny D."/>
            <person name="Dugan-Rocha S."/>
            <person name="Ding Y."/>
            <person name="Hawes A."/>
            <person name="Liu W."/>
            <person name="Perez L."/>
            <person name="Kovar C."/>
            <person name="Dinh H."/>
            <person name="Lee S."/>
            <person name="Nazareth L."/>
            <person name="Blyth P."/>
            <person name="Holder M."/>
            <person name="Buhay C."/>
            <person name="Tirumalai M.R."/>
            <person name="Liu Y."/>
            <person name="Dasgupta I."/>
            <person name="Bokhetache L."/>
            <person name="Fujita M."/>
            <person name="Karouia F."/>
            <person name="Eswara Moorthy P."/>
            <person name="Siefert J."/>
            <person name="Uzman A."/>
            <person name="Buzumbo P."/>
            <person name="Verma A."/>
            <person name="Zwiya H."/>
            <person name="McWilliams B.D."/>
            <person name="Olowu A."/>
            <person name="Clinkenbeard K.D."/>
            <person name="Newcombe D."/>
            <person name="Golebiewski L."/>
            <person name="Petrosino J.F."/>
            <person name="Nicholson W.L."/>
            <person name="Fox G.E."/>
            <person name="Venkateswaran K."/>
            <person name="Highlander S.K."/>
            <person name="Weinstock G.M."/>
        </authorList>
    </citation>
    <scope>NUCLEOTIDE SEQUENCE [LARGE SCALE GENOMIC DNA]</scope>
    <source>
        <strain>SAFR-032</strain>
    </source>
</reference>
<accession>A8FF36</accession>
<protein>
    <recommendedName>
        <fullName evidence="1">HTH-type transcriptional regulator MntR</fullName>
    </recommendedName>
    <alternativeName>
        <fullName evidence="1">Manganese transport regulator</fullName>
    </alternativeName>
</protein>
<feature type="chain" id="PRO_1000062113" description="HTH-type transcriptional regulator MntR">
    <location>
        <begin position="1"/>
        <end position="144"/>
    </location>
</feature>
<feature type="domain" description="HTH dtxR-type" evidence="1">
    <location>
        <begin position="1"/>
        <end position="63"/>
    </location>
</feature>
<feature type="binding site" evidence="1">
    <location>
        <position position="8"/>
    </location>
    <ligand>
        <name>Mn(2+)</name>
        <dbReference type="ChEBI" id="CHEBI:29035"/>
        <label>1</label>
    </ligand>
</feature>
<feature type="binding site" evidence="1">
    <location>
        <position position="11"/>
    </location>
    <ligand>
        <name>Mn(2+)</name>
        <dbReference type="ChEBI" id="CHEBI:29035"/>
        <label>2</label>
    </ligand>
</feature>
<feature type="binding site" evidence="1">
    <location>
        <position position="77"/>
    </location>
    <ligand>
        <name>Mn(2+)</name>
        <dbReference type="ChEBI" id="CHEBI:29035"/>
        <label>2</label>
    </ligand>
</feature>
<feature type="binding site" evidence="1">
    <location>
        <position position="99"/>
    </location>
    <ligand>
        <name>Mn(2+)</name>
        <dbReference type="ChEBI" id="CHEBI:29035"/>
        <label>1</label>
    </ligand>
</feature>
<feature type="binding site" evidence="1">
    <location>
        <position position="99"/>
    </location>
    <ligand>
        <name>Mn(2+)</name>
        <dbReference type="ChEBI" id="CHEBI:29035"/>
        <label>2</label>
    </ligand>
</feature>
<feature type="binding site" evidence="1">
    <location>
        <position position="102"/>
    </location>
    <ligand>
        <name>Mn(2+)</name>
        <dbReference type="ChEBI" id="CHEBI:29035"/>
        <label>1</label>
    </ligand>
</feature>
<feature type="binding site" evidence="1">
    <location>
        <position position="102"/>
    </location>
    <ligand>
        <name>Mn(2+)</name>
        <dbReference type="ChEBI" id="CHEBI:29035"/>
        <label>2</label>
    </ligand>
</feature>
<feature type="binding site" evidence="1">
    <location>
        <position position="103"/>
    </location>
    <ligand>
        <name>Mn(2+)</name>
        <dbReference type="ChEBI" id="CHEBI:29035"/>
        <label>1</label>
    </ligand>
</feature>
<comment type="function">
    <text evidence="1">Central regulator of manganese homeostasis.</text>
</comment>
<comment type="activity regulation">
    <text evidence="1">DNA binding is strongly activated by Mn(2+).</text>
</comment>
<comment type="subunit">
    <text evidence="1">Homodimer.</text>
</comment>
<comment type="subcellular location">
    <subcellularLocation>
        <location evidence="1">Cytoplasm</location>
    </subcellularLocation>
</comment>
<comment type="similarity">
    <text evidence="1">Belongs to the DtxR/MntR family.</text>
</comment>
<dbReference type="EMBL" id="CP000813">
    <property type="protein sequence ID" value="ABV62853.1"/>
    <property type="molecule type" value="Genomic_DNA"/>
</dbReference>
<dbReference type="RefSeq" id="WP_012010548.1">
    <property type="nucleotide sequence ID" value="NZ_VEIS01000005.1"/>
</dbReference>
<dbReference type="SMR" id="A8FF36"/>
<dbReference type="STRING" id="315750.BPUM_2184"/>
<dbReference type="GeneID" id="5621450"/>
<dbReference type="KEGG" id="bpu:BPUM_2184"/>
<dbReference type="eggNOG" id="COG1321">
    <property type="taxonomic scope" value="Bacteria"/>
</dbReference>
<dbReference type="HOGENOM" id="CLU_069532_3_0_9"/>
<dbReference type="OrthoDB" id="9791355at2"/>
<dbReference type="Proteomes" id="UP000001355">
    <property type="component" value="Chromosome"/>
</dbReference>
<dbReference type="GO" id="GO:0005737">
    <property type="term" value="C:cytoplasm"/>
    <property type="evidence" value="ECO:0007669"/>
    <property type="project" value="UniProtKB-SubCell"/>
</dbReference>
<dbReference type="GO" id="GO:0003677">
    <property type="term" value="F:DNA binding"/>
    <property type="evidence" value="ECO:0007669"/>
    <property type="project" value="UniProtKB-KW"/>
</dbReference>
<dbReference type="GO" id="GO:0003700">
    <property type="term" value="F:DNA-binding transcription factor activity"/>
    <property type="evidence" value="ECO:0007669"/>
    <property type="project" value="UniProtKB-UniRule"/>
</dbReference>
<dbReference type="GO" id="GO:0030145">
    <property type="term" value="F:manganese ion binding"/>
    <property type="evidence" value="ECO:0007669"/>
    <property type="project" value="UniProtKB-UniRule"/>
</dbReference>
<dbReference type="GO" id="GO:0046983">
    <property type="term" value="F:protein dimerization activity"/>
    <property type="evidence" value="ECO:0007669"/>
    <property type="project" value="InterPro"/>
</dbReference>
<dbReference type="GO" id="GO:0030026">
    <property type="term" value="P:intracellular manganese ion homeostasis"/>
    <property type="evidence" value="ECO:0007669"/>
    <property type="project" value="UniProtKB-UniRule"/>
</dbReference>
<dbReference type="FunFam" id="1.10.10.10:FF:000189">
    <property type="entry name" value="HTH-type transcriptional regulator MntR"/>
    <property type="match status" value="1"/>
</dbReference>
<dbReference type="Gene3D" id="1.10.60.10">
    <property type="entry name" value="Iron dependent repressor, metal binding and dimerisation domain"/>
    <property type="match status" value="1"/>
</dbReference>
<dbReference type="Gene3D" id="1.10.10.10">
    <property type="entry name" value="Winged helix-like DNA-binding domain superfamily/Winged helix DNA-binding domain"/>
    <property type="match status" value="1"/>
</dbReference>
<dbReference type="HAMAP" id="MF_00732">
    <property type="entry name" value="HTH_MntR"/>
    <property type="match status" value="1"/>
</dbReference>
<dbReference type="InterPro" id="IPR050536">
    <property type="entry name" value="DtxR_MntR_Metal-Reg"/>
</dbReference>
<dbReference type="InterPro" id="IPR001367">
    <property type="entry name" value="Fe_dep_repressor"/>
</dbReference>
<dbReference type="InterPro" id="IPR036421">
    <property type="entry name" value="Fe_dep_repressor_sf"/>
</dbReference>
<dbReference type="InterPro" id="IPR022687">
    <property type="entry name" value="HTH_DTXR"/>
</dbReference>
<dbReference type="InterPro" id="IPR022897">
    <property type="entry name" value="HTH_tscrpt_reg_MntR"/>
</dbReference>
<dbReference type="InterPro" id="IPR022689">
    <property type="entry name" value="Iron_dep_repressor"/>
</dbReference>
<dbReference type="InterPro" id="IPR036388">
    <property type="entry name" value="WH-like_DNA-bd_sf"/>
</dbReference>
<dbReference type="InterPro" id="IPR036390">
    <property type="entry name" value="WH_DNA-bd_sf"/>
</dbReference>
<dbReference type="NCBIfam" id="NF003025">
    <property type="entry name" value="PRK03902.1"/>
    <property type="match status" value="1"/>
</dbReference>
<dbReference type="PANTHER" id="PTHR33238">
    <property type="entry name" value="IRON (METAL) DEPENDENT REPRESSOR, DTXR FAMILY"/>
    <property type="match status" value="1"/>
</dbReference>
<dbReference type="PANTHER" id="PTHR33238:SF11">
    <property type="entry name" value="TRANSCRIPTIONAL REGULATOR MNTR"/>
    <property type="match status" value="1"/>
</dbReference>
<dbReference type="Pfam" id="PF02742">
    <property type="entry name" value="Fe_dep_repr_C"/>
    <property type="match status" value="1"/>
</dbReference>
<dbReference type="Pfam" id="PF01325">
    <property type="entry name" value="Fe_dep_repress"/>
    <property type="match status" value="1"/>
</dbReference>
<dbReference type="SMART" id="SM00529">
    <property type="entry name" value="HTH_DTXR"/>
    <property type="match status" value="1"/>
</dbReference>
<dbReference type="SUPFAM" id="SSF47979">
    <property type="entry name" value="Iron-dependent repressor protein, dimerization domain"/>
    <property type="match status" value="1"/>
</dbReference>
<dbReference type="SUPFAM" id="SSF46785">
    <property type="entry name" value="Winged helix' DNA-binding domain"/>
    <property type="match status" value="1"/>
</dbReference>
<dbReference type="PROSITE" id="PS50944">
    <property type="entry name" value="HTH_DTXR"/>
    <property type="match status" value="1"/>
</dbReference>
<keyword id="KW-0010">Activator</keyword>
<keyword id="KW-0963">Cytoplasm</keyword>
<keyword id="KW-0238">DNA-binding</keyword>
<keyword id="KW-0464">Manganese</keyword>
<keyword id="KW-0479">Metal-binding</keyword>
<keyword id="KW-0678">Repressor</keyword>
<keyword id="KW-0804">Transcription</keyword>
<keyword id="KW-0805">Transcription regulation</keyword>
<sequence>MTTPSMEDYIEQIYMLIEEKGYARVSDIAEALAVHPSSVTKMVQKLDKDEYLIYEKYRGLILTPKGKKIGKRLVYRHELLEQFLRIIGVDEEKIYDDVEGIEHHLSWNSIDRIGDLVQFFEESDERSVQLKAIQKKNEQTNQES</sequence>
<organism>
    <name type="scientific">Bacillus pumilus (strain SAFR-032)</name>
    <dbReference type="NCBI Taxonomy" id="315750"/>
    <lineage>
        <taxon>Bacteria</taxon>
        <taxon>Bacillati</taxon>
        <taxon>Bacillota</taxon>
        <taxon>Bacilli</taxon>
        <taxon>Bacillales</taxon>
        <taxon>Bacillaceae</taxon>
        <taxon>Bacillus</taxon>
    </lineage>
</organism>